<reference key="1">
    <citation type="journal article" date="2009" name="PLoS Biol.">
        <title>Lineage-specific biology revealed by a finished genome assembly of the mouse.</title>
        <authorList>
            <person name="Church D.M."/>
            <person name="Goodstadt L."/>
            <person name="Hillier L.W."/>
            <person name="Zody M.C."/>
            <person name="Goldstein S."/>
            <person name="She X."/>
            <person name="Bult C.J."/>
            <person name="Agarwala R."/>
            <person name="Cherry J.L."/>
            <person name="DiCuccio M."/>
            <person name="Hlavina W."/>
            <person name="Kapustin Y."/>
            <person name="Meric P."/>
            <person name="Maglott D."/>
            <person name="Birtle Z."/>
            <person name="Marques A.C."/>
            <person name="Graves T."/>
            <person name="Zhou S."/>
            <person name="Teague B."/>
            <person name="Potamousis K."/>
            <person name="Churas C."/>
            <person name="Place M."/>
            <person name="Herschleb J."/>
            <person name="Runnheim R."/>
            <person name="Forrest D."/>
            <person name="Amos-Landgraf J."/>
            <person name="Schwartz D.C."/>
            <person name="Cheng Z."/>
            <person name="Lindblad-Toh K."/>
            <person name="Eichler E.E."/>
            <person name="Ponting C.P."/>
        </authorList>
    </citation>
    <scope>NUCLEOTIDE SEQUENCE [LARGE SCALE GENOMIC DNA]</scope>
    <source>
        <strain>C57BL/6J</strain>
    </source>
</reference>
<reference key="2">
    <citation type="journal article" date="2004" name="Genome Res.">
        <title>The status, quality, and expansion of the NIH full-length cDNA project: the Mammalian Gene Collection (MGC).</title>
        <authorList>
            <consortium name="The MGC Project Team"/>
        </authorList>
    </citation>
    <scope>NUCLEOTIDE SEQUENCE [LARGE SCALE MRNA] (ISOFORMS 2 AND 3)</scope>
    <source>
        <strain>C57BL/6J</strain>
        <strain>FVB/N</strain>
        <tissue>Head</tissue>
        <tissue>Mammary tumor</tissue>
    </source>
</reference>
<reference key="3">
    <citation type="journal article" date="2002" name="J. Cell Sci.">
        <title>Kinetochore localisation of the DNA damage response component 53BP1 during mitosis.</title>
        <authorList>
            <person name="Jullien D."/>
            <person name="Vagnarelli P."/>
            <person name="Earnshaw W.C."/>
            <person name="Adachi Y."/>
        </authorList>
    </citation>
    <scope>NUCLEOTIDE SEQUENCE [MRNA] OF 6-1969 (ISOFORM 2)</scope>
    <scope>PHOSPHORYLATION</scope>
    <scope>SUBCELLULAR LOCATION</scope>
    <source>
        <strain>BALB/cJ</strain>
    </source>
</reference>
<reference key="4">
    <citation type="journal article" date="1996" name="J. Biol. Chem.">
        <title>p202, an interferon-inducible modulator of transcription, inhibits transcriptional activation by the p53 tumor suppressor protein, and a segment from the p53-binding protein 1 that binds to p202 overcomes this inhibition.</title>
        <authorList>
            <person name="Datta B."/>
            <person name="Li B."/>
            <person name="Choubey D."/>
            <person name="Nallur G."/>
            <person name="Lengyel P."/>
        </authorList>
    </citation>
    <scope>NUCLEOTIDE SEQUENCE [MRNA] OF 1176-1273</scope>
    <scope>INTERACTION WITH IFI202A</scope>
</reference>
<reference key="5">
    <citation type="journal article" date="2001" name="J. Biol. Chem.">
        <title>Histone H2AX is phosphorylated in an ATR-dependent manner in response to replicational stress.</title>
        <authorList>
            <person name="Ward I.M."/>
            <person name="Chen J."/>
        </authorList>
    </citation>
    <scope>SUBCELLULAR LOCATION</scope>
</reference>
<reference key="6">
    <citation type="journal article" date="2003" name="Mol. Cell. Biol.">
        <title>p53 Binding protein 53BP1 is required for DNA damage responses and tumor suppression in mice.</title>
        <authorList>
            <person name="Ward I.M."/>
            <person name="Minn K."/>
            <person name="van Deursen J."/>
            <person name="Chen J."/>
        </authorList>
    </citation>
    <scope>DISRUPTION PHENOTYPE</scope>
</reference>
<reference key="7">
    <citation type="journal article" date="2004" name="J. Cell Biol.">
        <title>53BP1 is required for class switch recombination.</title>
        <authorList>
            <person name="Ward I.M."/>
            <person name="Reina-San-Martin B."/>
            <person name="Olaru A."/>
            <person name="Minn K."/>
            <person name="Tamada K."/>
            <person name="Lau J.S."/>
            <person name="Cascalho M."/>
            <person name="Chen L."/>
            <person name="Nussenzweig A."/>
            <person name="Livak F."/>
            <person name="Nussenzweig M.C."/>
            <person name="Chen J."/>
        </authorList>
    </citation>
    <scope>FUNCTION</scope>
    <scope>DISRUPTION PHENOTYPE</scope>
</reference>
<reference key="8">
    <citation type="journal article" date="2004" name="Nat. Immunol.">
        <title>53BP1 links DNA damage-response pathways to immunoglobulin heavy chain class-switch recombination.</title>
        <authorList>
            <person name="Manis J.P."/>
            <person name="Morales J.C."/>
            <person name="Xia Z."/>
            <person name="Kutok J.L."/>
            <person name="Alt F.W."/>
            <person name="Carpenter P.B."/>
        </authorList>
    </citation>
    <scope>FUNCTION</scope>
    <scope>DISRUPTION PHENOTYPE</scope>
</reference>
<reference key="9">
    <citation type="journal article" date="2009" name="Immunity">
        <title>The phagosomal proteome in interferon-gamma-activated macrophages.</title>
        <authorList>
            <person name="Trost M."/>
            <person name="English L."/>
            <person name="Lemieux S."/>
            <person name="Courcelles M."/>
            <person name="Desjardins M."/>
            <person name="Thibault P."/>
        </authorList>
    </citation>
    <scope>PHOSPHORYLATION [LARGE SCALE ANALYSIS] AT SER-552</scope>
    <scope>IDENTIFICATION BY MASS SPECTROMETRY [LARGE SCALE ANALYSIS]</scope>
</reference>
<reference key="10">
    <citation type="journal article" date="2009" name="Mol. Cell. Proteomics">
        <title>Large scale localization of protein phosphorylation by use of electron capture dissociation mass spectrometry.</title>
        <authorList>
            <person name="Sweet S.M."/>
            <person name="Bailey C.M."/>
            <person name="Cunningham D.L."/>
            <person name="Heath J.K."/>
            <person name="Cooper H.J."/>
        </authorList>
    </citation>
    <scope>PHOSPHORYLATION [LARGE SCALE ANALYSIS] AT SER-1115</scope>
    <scope>IDENTIFICATION BY MASS SPECTROMETRY [LARGE SCALE ANALYSIS]</scope>
    <source>
        <tissue>Embryonic fibroblast</tissue>
    </source>
</reference>
<reference key="11">
    <citation type="journal article" date="2010" name="Cell">
        <title>53BP1 inhibits homologous recombination in Brca1-deficient cells by blocking resection of DNA breaks.</title>
        <authorList>
            <person name="Bunting S.F."/>
            <person name="Callen E."/>
            <person name="Wong N."/>
            <person name="Chen H.T."/>
            <person name="Polato F."/>
            <person name="Gunn A."/>
            <person name="Bothmer A."/>
            <person name="Feldhahn N."/>
            <person name="Fernandez-Capetillo O."/>
            <person name="Cao L."/>
            <person name="Xu X."/>
            <person name="Deng C.X."/>
            <person name="Finkel T."/>
            <person name="Nussenzweig M."/>
            <person name="Stark J.M."/>
            <person name="Nussenzweig A."/>
        </authorList>
    </citation>
    <scope>FUNCTION</scope>
</reference>
<reference key="12">
    <citation type="journal article" date="2010" name="Cell">
        <title>A tissue-specific atlas of mouse protein phosphorylation and expression.</title>
        <authorList>
            <person name="Huttlin E.L."/>
            <person name="Jedrychowski M.P."/>
            <person name="Elias J.E."/>
            <person name="Goswami T."/>
            <person name="Rad R."/>
            <person name="Beausoleil S.A."/>
            <person name="Villen J."/>
            <person name="Haas W."/>
            <person name="Sowa M.E."/>
            <person name="Gygi S.P."/>
        </authorList>
    </citation>
    <scope>PHOSPHORYLATION [LARGE SCALE ANALYSIS] AT SER-73; SER-267; SER-268; SER-382; SER-429; SER-464; SER-552; SER-627; SER-631; SER-632; SER-716; SER-719; SER-822; SER-1096; SER-1115; SER-1423; SER-1427; SER-1459; SER-1470 AND SER-1628</scope>
    <scope>IDENTIFICATION BY MASS SPECTROMETRY [LARGE SCALE ANALYSIS]</scope>
    <source>
        <tissue>Brain</tissue>
        <tissue>Brown adipose tissue</tissue>
        <tissue>Heart</tissue>
        <tissue>Kidney</tissue>
        <tissue>Liver</tissue>
        <tissue>Lung</tissue>
        <tissue>Pancreas</tissue>
        <tissue>Spleen</tissue>
        <tissue>Testis</tissue>
    </source>
</reference>
<reference key="13">
    <citation type="journal article" date="2010" name="Nat. Struct. Mol. Biol.">
        <title>53BP1 loss rescues BRCA1 deficiency and is associated with triple-negative and BRCA-mutated breast cancers.</title>
        <authorList>
            <person name="Bouwman P."/>
            <person name="Aly A."/>
            <person name="Escandell J.M."/>
            <person name="Pieterse M."/>
            <person name="Bartkova J."/>
            <person name="van der Gulden H."/>
            <person name="Hiddingh S."/>
            <person name="Thanasoula M."/>
            <person name="Kulkarni A."/>
            <person name="Yang Q."/>
            <person name="Haffty B.G."/>
            <person name="Tommiska J."/>
            <person name="Blomqvist C."/>
            <person name="Drapkin R."/>
            <person name="Adams D.J."/>
            <person name="Nevanlinna H."/>
            <person name="Bartek J."/>
            <person name="Tarsounas M."/>
            <person name="Ganesan S."/>
            <person name="Jonkers J."/>
        </authorList>
    </citation>
    <scope>FUNCTION</scope>
</reference>
<reference key="14">
    <citation type="journal article" date="2012" name="PLoS ONE">
        <title>Impact of histone H4 lysine 20 methylation on 53BP1 responses to chromosomal double strand breaks.</title>
        <authorList>
            <person name="Hartlerode A.J."/>
            <person name="Guan Y."/>
            <person name="Rajendran A."/>
            <person name="Ura K."/>
            <person name="Schotta G."/>
            <person name="Xie A."/>
            <person name="Shah J.V."/>
            <person name="Scully R."/>
        </authorList>
    </citation>
    <scope>SUBCELLULAR LOCATION</scope>
    <scope>DOMAIN</scope>
</reference>
<reference key="15">
    <citation type="journal article" date="2013" name="Mol. Cell">
        <title>RIF1 is essential for 53BP1-dependent nonhomologous end joining and suppression of DNA double-strand break resection.</title>
        <authorList>
            <person name="Chapman J.R."/>
            <person name="Barral P."/>
            <person name="Vannier J.B."/>
            <person name="Borel V."/>
            <person name="Steger M."/>
            <person name="Tomas-Loba A."/>
            <person name="Sartori A.A."/>
            <person name="Adams I.R."/>
            <person name="Batista F.D."/>
            <person name="Boulton S.J."/>
        </authorList>
    </citation>
    <scope>FUNCTION</scope>
    <scope>SUBCELLULAR LOCATION</scope>
    <scope>PHOSPHORYLATION</scope>
    <scope>INTERACTION WITH RIF1</scope>
</reference>
<reference key="16">
    <citation type="journal article" date="2013" name="Science">
        <title>Rif1 prevents resection of DNA breaks and promotes immunoglobulin class switching.</title>
        <authorList>
            <person name="Di Virgilio M."/>
            <person name="Callen E."/>
            <person name="Yamane A."/>
            <person name="Zhang W."/>
            <person name="Jankovic M."/>
            <person name="Gitlin A.D."/>
            <person name="Feldhahn N."/>
            <person name="Resch W."/>
            <person name="Oliveira T.Y."/>
            <person name="Chait B.T."/>
            <person name="Nussenzweig A."/>
            <person name="Casellas R."/>
            <person name="Robbiani D.F."/>
            <person name="Nussenzweig M.C."/>
        </authorList>
    </citation>
    <scope>SUBCELLULAR LOCATION</scope>
    <scope>INTERACTION WITH RIF1</scope>
    <scope>PHOSPHORYLATION</scope>
</reference>
<reference key="17">
    <citation type="journal article" date="2014" name="Mol. Cell. Proteomics">
        <title>Immunoaffinity enrichment and mass spectrometry analysis of protein methylation.</title>
        <authorList>
            <person name="Guo A."/>
            <person name="Gu H."/>
            <person name="Zhou J."/>
            <person name="Mulhern D."/>
            <person name="Wang Y."/>
            <person name="Lee K.A."/>
            <person name="Yang V."/>
            <person name="Aguiar M."/>
            <person name="Kornhauser J."/>
            <person name="Jia X."/>
            <person name="Ren J."/>
            <person name="Beausoleil S.A."/>
            <person name="Silva J.C."/>
            <person name="Vemulapalli V."/>
            <person name="Bedford M.T."/>
            <person name="Comb M.J."/>
        </authorList>
    </citation>
    <scope>METHYLATION [LARGE SCALE ANALYSIS] AT ARG-1329 AND ARG-1352</scope>
    <scope>IDENTIFICATION BY MASS SPECTROMETRY [LARGE SCALE ANALYSIS]</scope>
    <source>
        <tissue>Brain</tissue>
        <tissue>Embryo</tissue>
    </source>
</reference>
<reference key="18">
    <citation type="journal article" date="2015" name="Nature">
        <title>Orientation-specific joining of AID-initiated DNA breaks promotes antibody class switching.</title>
        <authorList>
            <person name="Dong J."/>
            <person name="Panchakshari R.A."/>
            <person name="Zhang T."/>
            <person name="Zhang Y."/>
            <person name="Hu J."/>
            <person name="Volpi S.A."/>
            <person name="Meyers R.M."/>
            <person name="Ho Y.J."/>
            <person name="Du Z."/>
            <person name="Robbiani D.F."/>
            <person name="Meng F."/>
            <person name="Gostissa M."/>
            <person name="Nussenzweig M.C."/>
            <person name="Manis J.P."/>
            <person name="Alt F.W."/>
        </authorList>
    </citation>
    <scope>FUNCTION</scope>
</reference>
<reference key="19">
    <citation type="journal article" date="2019" name="Mol. Cell. Biol.">
        <title>Phosphorylation of TIP60 Suppresses 53BP1 Localization at DNA Damage Sites.</title>
        <authorList>
            <person name="Li M.L."/>
            <person name="Jiang Q."/>
            <person name="Bhanu N.V."/>
            <person name="Wu J."/>
            <person name="Li W."/>
            <person name="Garcia B.A."/>
            <person name="Greenberg R.A."/>
        </authorList>
    </citation>
    <scope>FUNCTION</scope>
    <scope>SUBCELLULAR LOCATION</scope>
</reference>
<reference key="20">
    <citation type="journal article" date="2004" name="Structure">
        <title>The Tudor tandem of 53BP1: a new structural motif involved in DNA and RG-rich peptide binding.</title>
        <authorList>
            <person name="Charier G."/>
            <person name="Couprie J."/>
            <person name="Alpha-Bazin B."/>
            <person name="Meyer V."/>
            <person name="Quemeneur E."/>
            <person name="Guerois R."/>
            <person name="Callebaut I."/>
            <person name="Gilquin B."/>
            <person name="Zinn-Justin S."/>
        </authorList>
    </citation>
    <scope>STRUCTURE BY NMR OF 1475-1629</scope>
</reference>
<comment type="function">
    <text evidence="1 7 8 9 10 13 14 15">Double-strand break (DSB) repair protein involved in response to DNA damage, telomere dynamics and class-switch recombination (CSR) during antibody genesis (PubMed:15077110, PubMed:15159415, PubMed:20362325, PubMed:20453858, PubMed:23333305, PubMed:26308889). Plays a key role in the repair of double-strand DNA breaks (DSBs) in response to DNA damage by promoting non-homologous end joining (NHEJ)-mediated repair of DSBs and specifically counteracting the function of the homologous recombination (HR) repair protein BRCA1 (PubMed:20362325, PubMed:23333305, PubMed:30297459). In response to DSBs, phosphorylation by ATM promotes interaction with RIF1 and dissociation from NUDT16L1/TIRR, leading to recruitment to DSBs sites. Recruited to DSBs sites by recognizing and binding histone H2A monoubiquitinated at 'Lys-15' (H2AK15Ub) and histone H4 dimethylated at 'Lys-20' (H4K20me2), two histone marks that are present at DSBs sites. Required for immunoglobulin class-switch recombination (CSR) during antibody genesis, a process that involves the generation of DNA DSBs (PubMed:15077110, PubMed:15159415). Participates in the repair and the orientation of the broken DNA ends during CSR (PubMed:26308889). In contrast, it is not required for classic NHEJ and V(D)J recombination (PubMed:15159415). Promotes NHEJ of dysfunctional telomeres (By similarity).</text>
</comment>
<comment type="subunit">
    <text evidence="1 11 12 13 16">Homoligomer (By similarity). Interacts with p53/TP53 (via the central domain) (By similarity). Interacts with DCLRE1C (By similarity). Interacts with histone H2AX and this requires phosphorylation of H2AX on 'Ser-139' (By similarity). Interacts with histone H4 that has been dimethylated at 'Lys-20' (H4K20me2) (PubMed:23209566). Has low affinity for histone H4 containing monomethylated 'Lys-20' (H4K20me1) (By similarity). Does not bind histone H4 containing unmethylated or trimethylated 'Lys-20' (H4K20me3) (By similarity). Has low affinity for histone H3 that has been dimethylated on 'Lys-79' (By similarity). Has very low affinity for histone H3 that has been monomethylated on 'Lys-79' (in vitro) (By similarity). Does not bind unmethylated histone H3 (By similarity). Interacts with histone H2A monoubiquitinated at 'Lys-15' (H2AK15Ub) (By similarity). Interacts with PWWP3A/EXPAND1 (By similarity). Interacts with CHEK2; modulates CHEK2 phosphorylation at 'Thr-68' in response to infrared (By similarity). Interacts with MSL1; this interaction may be required for MSL1 DNA repair activity, but not for histone acetyltransferase activity (By similarity). Interacts (when phosphorylated by ATM) with RIF1 (PubMed:23306439, PubMed:23333305). Interacts (via the Tudor-like domain) with NUDT16L1/TIRR; interaction masks the Tudor-like domain and prevents recruitment to chromatin (By similarity). Interacts with PAXIP1 (By similarity). Interacts with IFI202A (PubMed:8910340). Interacts with SHLD2 (By similarity). Interacts (when phosphorylated) with TOPBP1 (By similarity). Interacts with GFI1; promoting methylation by PRMT1 (By similarity). Interacts with (phosphorylated) DYNLL1; specifically binds DYNLL1 phosphorylated at 'Ser-88' and promotes its recruitment to double stand breaks (DSBs) (By similarity).</text>
</comment>
<comment type="interaction">
    <interactant intactId="EBI-15790796">
        <id>P70399-1</id>
    </interactant>
    <interactant intactId="EBI-476768">
        <id>P53350</id>
        <label>PLK1</label>
    </interactant>
    <organismsDiffer>true</organismsDiffer>
    <experiments>2</experiments>
</comment>
<comment type="subcellular location">
    <subcellularLocation>
        <location evidence="5">Nucleus</location>
    </subcellularLocation>
    <subcellularLocation>
        <location evidence="4 11 12 13 15">Chromosome</location>
    </subcellularLocation>
    <subcellularLocation>
        <location evidence="5">Chromosome</location>
        <location evidence="5">Centromere</location>
        <location evidence="5">Kinetochore</location>
    </subcellularLocation>
    <text evidence="4 5 11 12 13">Localizes to the nucleus in absence of DNA damage (PubMed:11801725). Following DNA damage, recruited to sites of DNA damage, such as double stand breaks (DSBs) (PubMed:11673449, PubMed:23209566, PubMed:23306439, PubMed:23333305). Recognizes and binds histone H2A monoubiquitinated at 'Lys-15' (H2AK15Ub) and histone H4 dimethylated at 'Lys-20' (H4K20me2), two histone marks that are present at DSBs sites (PubMed:23209566). Associated with kinetochores during mitosis (PubMed:11801725).</text>
</comment>
<comment type="alternative products">
    <event type="alternative splicing"/>
    <isoform>
        <id>P70399-1</id>
        <name>1</name>
        <sequence type="displayed"/>
    </isoform>
    <isoform>
        <id>P70399-5</id>
        <name>2</name>
        <sequence type="described" ref="VSP_058927"/>
    </isoform>
    <isoform>
        <id>P70399-6</id>
        <name>3</name>
        <sequence type="described" ref="VSP_058926 VSP_058927"/>
    </isoform>
</comment>
<comment type="domain">
    <text evidence="1 11">The Tudor-like region mediates binding to histone H4 dimethylated at 'Lys-20' (H4K20me2) (PubMed:23209566). Interaction with NUDT16L1/TIRR masks the Tudor-like domain and prevents recruitment to chromatin (By similarity).</text>
</comment>
<comment type="domain">
    <text evidence="1">The UDR (ubiquitin-dependent recruitment) motif specifically recognizes and binds histone H2A monoubiquitinated at 'Lys-15' (H2AK15ub). Phosphorylation of the UDR blocks interaction with H2AK15ub.</text>
</comment>
<comment type="PTM">
    <text evidence="1 12 13">Phosphorylated at basal level in the absence of DNA damage (By similarity). Phosphorylated by ATM in response to DNA damage: phosphorylation at different sites promotes interaction with different set of proteins: phosphorylation at the N-terminus by ATM (residues from 11-181) promotes interaction with PAXIP1 and non-homologous end joining (NHEJ) of dysfunctional telomeres (By similarity). Phosphorylation by ATM at residues that are located more C-terminus (residues 300-650) leads to promote interaction with RIF1 (PubMed:23306439, PubMed:23333305). Interaction with RIF1 leads to disrupt interaction with NUDT16L1/TIRR (By similarity). Phosphorylation at Thr-1606 and Ser-1615 in the UDR motif blocks interaction with H2AK15ub (By similarity). Dephosphorylated by PPP4C (By similarity). Hyperphosphorylation during mitosis correlates with its exclusion from chromatin and DNA lesions (By similarity). Hyperphosphorylated in an ATR-dependent manner in response to DNA damage induced by UV irradiation (By similarity). Dephosphorylated by PPP5C (By similarity). Phosphorylation at Ser-368 and Thr-662 promotes interaction with TOPBP1 (By similarity). Phosphorylated by VRK1 (By similarity).</text>
</comment>
<comment type="PTM">
    <text evidence="1">Asymmetrically dimethylated on Arg residues by PRMT1. Methylation is required for DNA binding.</text>
</comment>
<comment type="PTM">
    <text evidence="1">Monoubiquitinated at Lys-1682 by MSL2 is reponse to DNA damage, leading to its stabilization.</text>
</comment>
<comment type="disruption phenotype">
    <text evidence="6 7 8">Mice display growth retardation and are immune deficient, radiation-sensitive and cancer-prone (PubMed:12640136). Cells show a slight S-phase checkpoint defect and prolonged G2/M arrest after treatment with ionizing radiation (PubMed:12640136). Cells show defects in the DNA damage response (PubMed:12640136). Mice display defects in immunoglobulin class-switch recombination (CSR) during antibody genesis (PubMed:15077110, PubMed:15159415). In contrast, no defects are observed in classic NHEJ and V(D)J recombination (PubMed:15159415).</text>
</comment>
<comment type="sequence caution" evidence="18">
    <conflict type="erroneous initiation">
        <sequence resource="EMBL-CDS" id="AAH79906"/>
    </conflict>
    <text>Truncated N-terminus.</text>
</comment>
<name>TP53B_MOUSE</name>
<sequence>MPGEQMDPTGSQLDSDFSQQDTPCLIIEDSQPESQVLEEDAGSHFSVLSRHLPNLQMHKENPVLDIVSNPEQSAVEQGDSNSSFNEHLKEKKASDPVESSHLGTSGSISQVIERLPQPNRTSSALAVTVEAASLPEEEKEEEELEEEKEGVGANAPGADSLAAEDSASSQLGFGVLELSQSQDVEEHTVPYDVNQEHLQLVTTNSGSSPLSDVDASTAIKCEEQPTEDIAMIEQPSKDIPVTVQPGKGIHVVEEQNLPLVRSEDRPSSPQVSVAAVETKEQVPARELLEEGPQVQPSSEPEVSSTQEDLFDQSSKTASDGCSTPSREEGGCSPVSTPATTLQLLQLSGQKPLVQESLSTNSSDLVAPSPDAFRSTPFIVPSSPTEQGGRKDEPMDMSVIPVGGEPFQKLHDDEAMETEKPLLPSQPAVSPQASTPVSRSTPVFTPGSLPIPSQPEFSHDIFIPSPSLEEPSDDVKKGGGLHSSSLTVECSKTSESEPKNFTDDLGLSMTGDSCKLMLSTSEYSQSSKMESLGSPRTEEDRENTQIDDTEPLSPVSNSKLPADSENVLVTPSQDDQVEMSQNVDKAKEDETEDRGDCKGREDAVAEDVCIDLTCDSGSQAVPSPATRSEALSSVLDQEEAMDTKEHHPEEGFSGSEVEEVPETPCGSHREEPKEEPMESIPLHLSLTETQSEALCLQKEAPKEECPEAMEVETSVISIDSPQKLQVLDQELEHKDPDTWEEATSEDSSVVIVDVKEPSPRADVSCEPLEEVEKCSDSQSWEGVAPEEEPCAENRLDTPEEKRIECDGDSKAETTEKDAVTEDSPQPPLPSVRDEPVRPDQETQQPQVQEKESPVTVDAEVADDKQLGPEGACQQLEKAPACASQSFCESSSETPFHFTLPKEGDIIPPLTGATPPLIGHLKLEPKRHSTPIGISNYPESTIATSDVTSESMVEINDPLLGNEKGDSESAPEMDGKLSLKMKLVSPETEASEESLQFSLEKPTTAERKNGSTAIAEPVASLQKPVPVFGCIYEAQQEKEAQSEAPPSAPDRANLLHFPSAQEEDKERPDVTPKLRQSEQPVKPVGPVMDDAAPEDSASPVSQQRASQEQRASQEPFSPAEDVMETDLLEGLAANQDRPSKMLMDRPTQSNIGIQTVDHSLCAPETVSAATQTVKSVCEQGTSTAEQNSGKQDATVQTERGSGEKPASAPVDDTESLHSQGEEEFEMPQPPHGHVLHRHMRTIREVRTLVTRVITDVYYVDGTEVERKVTEETEEPIVECQECETEVSPSQTGGSSGDLGDISSFSSKASSSHHTSSGTSLSAIHSSGSSGRGAGPLKGKASGTEAADFALPSSRGGPGKLSPRKGISQTGAPVCEEDGDAGLGIRQGGKAPVTPRGRGRRGRPPSRTTGTRETVVSGPLGVEDISPSMSPDDKSFTRIMPRVPDSTKRTDASSSTLRRSDSPEIPFQAATGSSDGLDSSSSGNSFVGLRVVAKWSSNGYFYSGKITRDVGAGKYKLLFDDGYECDVLGKDILLCDPIPLDTEVTALSEDEYFSAGVVKGHRKESGELYYSIEKEGQRKWYKRMAVILSLEQGNRLREQYGLGPYEAVTPLTKAADISLDNLVEGKRKRRSNISSPVTPTAASSSSTTPTRKATESPRASTGVPSGKRKLPTSEEERSPAKRGRKSATVKPGTVGAAEFVSPCETGDNIGEPSVLEEPRGPLPLNKTLFLGYAFLLTMATTSDKLASRSKLLDGPTGSSEEEEEFLEIPPFNKQYTECQLRAGAGYILEDFNEAQCNTAYQCLLIADQHCRTRKYFLCLASGIPCVSHVWVHDSCHANQLQNYRNYLLPAGYSLEEQRILDWQPRENPFQNLKVLLVSDQQQNFLELWSEILMTGGAASVKQHHSSAHNKDIALGVFDVVVTDPSCPASVLKCAEALQLPVVSQEWVIQCLIVGERIGFKQHPKYKHDYVSH</sequence>
<gene>
    <name evidence="1" type="primary">Tp53bp1</name>
    <name evidence="19" type="synonym">Trp53bp1</name>
</gene>
<accession>P70399</accession>
<accession>A2AU89</accession>
<accession>A2AU91</accession>
<accession>Q68FD0</accession>
<accession>Q8CI97</accession>
<accession>Q91YC9</accession>
<protein>
    <recommendedName>
        <fullName evidence="18">TP53-binding protein 1</fullName>
        <shortName evidence="17">53BP1</shortName>
        <shortName evidence="17">p53-binding protein 1</shortName>
        <shortName>p53BP1</shortName>
    </recommendedName>
</protein>
<organism>
    <name type="scientific">Mus musculus</name>
    <name type="common">Mouse</name>
    <dbReference type="NCBI Taxonomy" id="10090"/>
    <lineage>
        <taxon>Eukaryota</taxon>
        <taxon>Metazoa</taxon>
        <taxon>Chordata</taxon>
        <taxon>Craniata</taxon>
        <taxon>Vertebrata</taxon>
        <taxon>Euteleostomi</taxon>
        <taxon>Mammalia</taxon>
        <taxon>Eutheria</taxon>
        <taxon>Euarchontoglires</taxon>
        <taxon>Glires</taxon>
        <taxon>Rodentia</taxon>
        <taxon>Myomorpha</taxon>
        <taxon>Muroidea</taxon>
        <taxon>Muridae</taxon>
        <taxon>Murinae</taxon>
        <taxon>Mus</taxon>
        <taxon>Mus</taxon>
    </lineage>
</organism>
<dbReference type="EMBL" id="AL929059">
    <property type="status" value="NOT_ANNOTATED_CDS"/>
    <property type="molecule type" value="Genomic_DNA"/>
</dbReference>
<dbReference type="EMBL" id="BC035206">
    <property type="protein sequence ID" value="AAH35206.1"/>
    <property type="molecule type" value="mRNA"/>
</dbReference>
<dbReference type="EMBL" id="BC079906">
    <property type="protein sequence ID" value="AAH79906.1"/>
    <property type="status" value="ALT_INIT"/>
    <property type="molecule type" value="mRNA"/>
</dbReference>
<dbReference type="EMBL" id="AJ414734">
    <property type="protein sequence ID" value="CAC94013.1"/>
    <property type="molecule type" value="mRNA"/>
</dbReference>
<dbReference type="EMBL" id="U67885">
    <property type="protein sequence ID" value="AAC52876.1"/>
    <property type="molecule type" value="mRNA"/>
</dbReference>
<dbReference type="CCDS" id="CCDS50684.1">
    <molecule id="P70399-1"/>
</dbReference>
<dbReference type="RefSeq" id="NP_001277759.1">
    <property type="nucleotide sequence ID" value="NM_001290830.1"/>
</dbReference>
<dbReference type="RefSeq" id="NP_038763.3">
    <molecule id="P70399-1"/>
    <property type="nucleotide sequence ID" value="NM_013735.4"/>
</dbReference>
<dbReference type="RefSeq" id="XP_011237883.1">
    <molecule id="P70399-1"/>
    <property type="nucleotide sequence ID" value="XM_011239581.2"/>
</dbReference>
<dbReference type="PDB" id="1SSF">
    <property type="method" value="NMR"/>
    <property type="chains" value="A=1475-1629"/>
</dbReference>
<dbReference type="PDBsum" id="1SSF"/>
<dbReference type="BMRB" id="P70399"/>
<dbReference type="SMR" id="P70399"/>
<dbReference type="BioGRID" id="205144">
    <property type="interactions" value="45"/>
</dbReference>
<dbReference type="DIP" id="DIP-31595N"/>
<dbReference type="FunCoup" id="P70399">
    <property type="interactions" value="3218"/>
</dbReference>
<dbReference type="IntAct" id="P70399">
    <property type="interactions" value="30"/>
</dbReference>
<dbReference type="MINT" id="P70399"/>
<dbReference type="STRING" id="10090.ENSMUSP00000106278"/>
<dbReference type="ChEMBL" id="CHEMBL4295790"/>
<dbReference type="GlyGen" id="P70399">
    <property type="glycosylation" value="5 sites, 1 N-linked glycan (1 site), 1 O-linked glycan (1 site)"/>
</dbReference>
<dbReference type="iPTMnet" id="P70399"/>
<dbReference type="PhosphoSitePlus" id="P70399"/>
<dbReference type="SwissPalm" id="P70399"/>
<dbReference type="jPOST" id="P70399"/>
<dbReference type="PaxDb" id="10090-ENSMUSP00000106278"/>
<dbReference type="PeptideAtlas" id="P70399"/>
<dbReference type="ProteomicsDB" id="260722">
    <molecule id="P70399-1"/>
</dbReference>
<dbReference type="ProteomicsDB" id="260723">
    <molecule id="P70399-5"/>
</dbReference>
<dbReference type="ProteomicsDB" id="260724">
    <molecule id="P70399-6"/>
</dbReference>
<dbReference type="Pumba" id="P70399"/>
<dbReference type="Antibodypedia" id="1749">
    <property type="antibodies" value="1006 antibodies from 41 providers"/>
</dbReference>
<dbReference type="DNASU" id="27223"/>
<dbReference type="Ensembl" id="ENSMUST00000110648.8">
    <molecule id="P70399-1"/>
    <property type="protein sequence ID" value="ENSMUSP00000106278.2"/>
    <property type="gene ID" value="ENSMUSG00000043909.17"/>
</dbReference>
<dbReference type="GeneID" id="27223"/>
<dbReference type="KEGG" id="mmu:27223"/>
<dbReference type="UCSC" id="uc008lye.4">
    <property type="organism name" value="mouse"/>
</dbReference>
<dbReference type="AGR" id="MGI:1351320"/>
<dbReference type="CTD" id="27223"/>
<dbReference type="MGI" id="MGI:1351320">
    <property type="gene designation" value="Trp53bp1"/>
</dbReference>
<dbReference type="VEuPathDB" id="HostDB:ENSMUSG00000043909"/>
<dbReference type="eggNOG" id="KOG3548">
    <property type="taxonomic scope" value="Eukaryota"/>
</dbReference>
<dbReference type="GeneTree" id="ENSGT00390000011891"/>
<dbReference type="InParanoid" id="P70399"/>
<dbReference type="OMA" id="EPCVENR"/>
<dbReference type="OrthoDB" id="129353at2759"/>
<dbReference type="TreeFam" id="TF350227"/>
<dbReference type="Reactome" id="R-MMU-3232118">
    <property type="pathway name" value="SUMOylation of transcription factors"/>
</dbReference>
<dbReference type="Reactome" id="R-MMU-5693565">
    <property type="pathway name" value="Recruitment and ATM-mediated phosphorylation of repair and signaling proteins at DNA double strand breaks"/>
</dbReference>
<dbReference type="Reactome" id="R-MMU-5693571">
    <property type="pathway name" value="Nonhomologous End-Joining (NHEJ)"/>
</dbReference>
<dbReference type="Reactome" id="R-MMU-5693607">
    <property type="pathway name" value="Processing of DNA double-strand break ends"/>
</dbReference>
<dbReference type="Reactome" id="R-MMU-69473">
    <property type="pathway name" value="G2/M DNA damage checkpoint"/>
</dbReference>
<dbReference type="BioGRID-ORCS" id="27223">
    <property type="hits" value="4 hits in 115 CRISPR screens"/>
</dbReference>
<dbReference type="ChiTaRS" id="Trp53bp1">
    <property type="organism name" value="mouse"/>
</dbReference>
<dbReference type="EvolutionaryTrace" id="P70399"/>
<dbReference type="PRO" id="PR:P70399"/>
<dbReference type="Proteomes" id="UP000000589">
    <property type="component" value="Chromosome 2"/>
</dbReference>
<dbReference type="RNAct" id="P70399">
    <property type="molecule type" value="protein"/>
</dbReference>
<dbReference type="Bgee" id="ENSMUSG00000043909">
    <property type="expression patterns" value="Expressed in respiratory primordium and 267 other cell types or tissues"/>
</dbReference>
<dbReference type="ExpressionAtlas" id="P70399">
    <property type="expression patterns" value="baseline and differential"/>
</dbReference>
<dbReference type="GO" id="GO:0000781">
    <property type="term" value="C:chromosome, telomeric region"/>
    <property type="evidence" value="ECO:0000314"/>
    <property type="project" value="MGI"/>
</dbReference>
<dbReference type="GO" id="GO:0005737">
    <property type="term" value="C:cytoplasm"/>
    <property type="evidence" value="ECO:0007669"/>
    <property type="project" value="Ensembl"/>
</dbReference>
<dbReference type="GO" id="GO:1990391">
    <property type="term" value="C:DNA repair complex"/>
    <property type="evidence" value="ECO:0000314"/>
    <property type="project" value="MGI"/>
</dbReference>
<dbReference type="GO" id="GO:0000776">
    <property type="term" value="C:kinetochore"/>
    <property type="evidence" value="ECO:0000314"/>
    <property type="project" value="MGI"/>
</dbReference>
<dbReference type="GO" id="GO:0016604">
    <property type="term" value="C:nuclear body"/>
    <property type="evidence" value="ECO:0000314"/>
    <property type="project" value="MGI"/>
</dbReference>
<dbReference type="GO" id="GO:0005634">
    <property type="term" value="C:nucleus"/>
    <property type="evidence" value="ECO:0000314"/>
    <property type="project" value="MGI"/>
</dbReference>
<dbReference type="GO" id="GO:0005657">
    <property type="term" value="C:replication fork"/>
    <property type="evidence" value="ECO:0000314"/>
    <property type="project" value="MGI"/>
</dbReference>
<dbReference type="GO" id="GO:0035861">
    <property type="term" value="C:site of double-strand break"/>
    <property type="evidence" value="ECO:0000314"/>
    <property type="project" value="UniProtKB"/>
</dbReference>
<dbReference type="GO" id="GO:0003684">
    <property type="term" value="F:damaged DNA binding"/>
    <property type="evidence" value="ECO:0000314"/>
    <property type="project" value="MGI"/>
</dbReference>
<dbReference type="GO" id="GO:0140941">
    <property type="term" value="F:histone H4K20me methyltransferase activity"/>
    <property type="evidence" value="ECO:0000314"/>
    <property type="project" value="GO_Central"/>
</dbReference>
<dbReference type="GO" id="GO:0140005">
    <property type="term" value="F:histone H4K20me2 reader activity"/>
    <property type="evidence" value="ECO:0000314"/>
    <property type="project" value="UniProtKB"/>
</dbReference>
<dbReference type="GO" id="GO:0035064">
    <property type="term" value="F:methylated histone binding"/>
    <property type="evidence" value="ECO:0007669"/>
    <property type="project" value="Ensembl"/>
</dbReference>
<dbReference type="GO" id="GO:0002039">
    <property type="term" value="F:p53 binding"/>
    <property type="evidence" value="ECO:0007669"/>
    <property type="project" value="Ensembl"/>
</dbReference>
<dbReference type="GO" id="GO:0061629">
    <property type="term" value="F:RNA polymerase II-specific DNA-binding transcription factor binding"/>
    <property type="evidence" value="ECO:0007669"/>
    <property type="project" value="Ensembl"/>
</dbReference>
<dbReference type="GO" id="GO:0043565">
    <property type="term" value="F:sequence-specific DNA binding"/>
    <property type="evidence" value="ECO:0000314"/>
    <property type="project" value="MGI"/>
</dbReference>
<dbReference type="GO" id="GO:0042162">
    <property type="term" value="F:telomeric DNA binding"/>
    <property type="evidence" value="ECO:0000314"/>
    <property type="project" value="MGI"/>
</dbReference>
<dbReference type="GO" id="GO:0003712">
    <property type="term" value="F:transcription coregulator activity"/>
    <property type="evidence" value="ECO:0007669"/>
    <property type="project" value="Ensembl"/>
</dbReference>
<dbReference type="GO" id="GO:0061649">
    <property type="term" value="F:ubiquitin-modified histone reader activity"/>
    <property type="evidence" value="ECO:0000250"/>
    <property type="project" value="UniProtKB"/>
</dbReference>
<dbReference type="GO" id="GO:0071481">
    <property type="term" value="P:cellular response to X-ray"/>
    <property type="evidence" value="ECO:0007669"/>
    <property type="project" value="Ensembl"/>
</dbReference>
<dbReference type="GO" id="GO:0006974">
    <property type="term" value="P:DNA damage response"/>
    <property type="evidence" value="ECO:0000266"/>
    <property type="project" value="MGI"/>
</dbReference>
<dbReference type="GO" id="GO:0006281">
    <property type="term" value="P:DNA repair"/>
    <property type="evidence" value="ECO:0000314"/>
    <property type="project" value="MGI"/>
</dbReference>
<dbReference type="GO" id="GO:0097680">
    <property type="term" value="P:double-strand break repair via classical nonhomologous end joining"/>
    <property type="evidence" value="ECO:0007669"/>
    <property type="project" value="Ensembl"/>
</dbReference>
<dbReference type="GO" id="GO:0006303">
    <property type="term" value="P:double-strand break repair via nonhomologous end joining"/>
    <property type="evidence" value="ECO:0000314"/>
    <property type="project" value="UniProtKB"/>
</dbReference>
<dbReference type="GO" id="GO:2000042">
    <property type="term" value="P:negative regulation of double-strand break repair via homologous recombination"/>
    <property type="evidence" value="ECO:0000314"/>
    <property type="project" value="UniProtKB"/>
</dbReference>
<dbReference type="GO" id="GO:0045830">
    <property type="term" value="P:positive regulation of isotype switching"/>
    <property type="evidence" value="ECO:0000315"/>
    <property type="project" value="UniProtKB"/>
</dbReference>
<dbReference type="GO" id="GO:0045944">
    <property type="term" value="P:positive regulation of transcription by RNA polymerase II"/>
    <property type="evidence" value="ECO:0007669"/>
    <property type="project" value="Ensembl"/>
</dbReference>
<dbReference type="GO" id="GO:0051260">
    <property type="term" value="P:protein homooligomerization"/>
    <property type="evidence" value="ECO:0000250"/>
    <property type="project" value="UniProtKB"/>
</dbReference>
<dbReference type="GO" id="GO:1990166">
    <property type="term" value="P:protein localization to site of double-strand break"/>
    <property type="evidence" value="ECO:0007669"/>
    <property type="project" value="Ensembl"/>
</dbReference>
<dbReference type="GO" id="GO:0006355">
    <property type="term" value="P:regulation of DNA-templated transcription"/>
    <property type="evidence" value="ECO:0000304"/>
    <property type="project" value="MGI"/>
</dbReference>
<dbReference type="CDD" id="cd17745">
    <property type="entry name" value="BRCT_p53bp1_rpt1"/>
    <property type="match status" value="1"/>
</dbReference>
<dbReference type="CDD" id="cd17724">
    <property type="entry name" value="BRCT_p53bp1_rpt2"/>
    <property type="match status" value="1"/>
</dbReference>
<dbReference type="CDD" id="cd20383">
    <property type="entry name" value="Tudor_53BP1"/>
    <property type="match status" value="1"/>
</dbReference>
<dbReference type="FunFam" id="2.30.30.140:FF:000021">
    <property type="entry name" value="Tumor suppressor p53-binding protein 1"/>
    <property type="match status" value="1"/>
</dbReference>
<dbReference type="FunFam" id="2.30.30.30:FF:000019">
    <property type="entry name" value="Tumor suppressor p53-binding protein 1"/>
    <property type="match status" value="1"/>
</dbReference>
<dbReference type="FunFam" id="3.40.50.10190:FF:000003">
    <property type="entry name" value="Tumor suppressor p53-binding protein 1"/>
    <property type="match status" value="1"/>
</dbReference>
<dbReference type="FunFam" id="3.40.50.10190:FF:000005">
    <property type="entry name" value="Tumor suppressor p53-binding protein 1"/>
    <property type="match status" value="1"/>
</dbReference>
<dbReference type="Gene3D" id="2.30.30.140">
    <property type="match status" value="1"/>
</dbReference>
<dbReference type="Gene3D" id="2.30.30.30">
    <property type="match status" value="1"/>
</dbReference>
<dbReference type="Gene3D" id="3.40.50.10190">
    <property type="entry name" value="BRCT domain"/>
    <property type="match status" value="2"/>
</dbReference>
<dbReference type="InterPro" id="IPR015125">
    <property type="entry name" value="53-BP1_Tudor"/>
</dbReference>
<dbReference type="InterPro" id="IPR001357">
    <property type="entry name" value="BRCT_dom"/>
</dbReference>
<dbReference type="InterPro" id="IPR036420">
    <property type="entry name" value="BRCT_dom_sf"/>
</dbReference>
<dbReference type="InterPro" id="IPR047249">
    <property type="entry name" value="BRCT_p53bp1-like_rpt1"/>
</dbReference>
<dbReference type="InterPro" id="IPR047250">
    <property type="entry name" value="BRCT_p53bp1-like_rpt2"/>
</dbReference>
<dbReference type="InterPro" id="IPR014722">
    <property type="entry name" value="Rib_uL2_dom2"/>
</dbReference>
<dbReference type="InterPro" id="IPR047252">
    <property type="entry name" value="TP53BP1-like"/>
</dbReference>
<dbReference type="PANTHER" id="PTHR15321:SF3">
    <property type="entry name" value="TP53-BINDING PROTEIN 1"/>
    <property type="match status" value="1"/>
</dbReference>
<dbReference type="PANTHER" id="PTHR15321">
    <property type="entry name" value="TUMOR SUPPRESSOR P53-BINDING PROTEIN 1"/>
    <property type="match status" value="1"/>
</dbReference>
<dbReference type="Pfam" id="PF09038">
    <property type="entry name" value="53-BP1_Tudor"/>
    <property type="match status" value="1"/>
</dbReference>
<dbReference type="Pfam" id="PF18428">
    <property type="entry name" value="BRCT_3"/>
    <property type="match status" value="1"/>
</dbReference>
<dbReference type="SMART" id="SM00292">
    <property type="entry name" value="BRCT"/>
    <property type="match status" value="2"/>
</dbReference>
<dbReference type="SUPFAM" id="SSF52113">
    <property type="entry name" value="BRCT domain"/>
    <property type="match status" value="2"/>
</dbReference>
<dbReference type="SUPFAM" id="SSF63748">
    <property type="entry name" value="Tudor/PWWP/MBT"/>
    <property type="match status" value="2"/>
</dbReference>
<dbReference type="PROSITE" id="PS50172">
    <property type="entry name" value="BRCT"/>
    <property type="match status" value="2"/>
</dbReference>
<feature type="chain" id="PRO_0000072644" description="TP53-binding protein 1">
    <location>
        <begin position="1"/>
        <end position="1969"/>
    </location>
</feature>
<feature type="domain" description="BRCT 1" evidence="2">
    <location>
        <begin position="1749"/>
        <end position="1845"/>
    </location>
</feature>
<feature type="domain" description="BRCT 2" evidence="2">
    <location>
        <begin position="1861"/>
        <end position="1961"/>
    </location>
</feature>
<feature type="region of interest" description="Disordered" evidence="3">
    <location>
        <begin position="1"/>
        <end position="24"/>
    </location>
</feature>
<feature type="region of interest" description="Disordered" evidence="3">
    <location>
        <begin position="67"/>
        <end position="168"/>
    </location>
</feature>
<feature type="region of interest" description="Disordered" evidence="3">
    <location>
        <begin position="254"/>
        <end position="337"/>
    </location>
</feature>
<feature type="region of interest" description="Disordered" evidence="3">
    <location>
        <begin position="352"/>
        <end position="599"/>
    </location>
</feature>
<feature type="region of interest" description="Disordered" evidence="3">
    <location>
        <begin position="614"/>
        <end position="707"/>
    </location>
</feature>
<feature type="region of interest" description="Disordered" evidence="3">
    <location>
        <begin position="754"/>
        <end position="870"/>
    </location>
</feature>
<feature type="region of interest" description="Disordered" evidence="3">
    <location>
        <begin position="927"/>
        <end position="1017"/>
    </location>
</feature>
<feature type="region of interest" description="Disordered" evidence="3">
    <location>
        <begin position="1034"/>
        <end position="1144"/>
    </location>
</feature>
<feature type="region of interest" description="Disordered" evidence="3">
    <location>
        <begin position="1178"/>
        <end position="1231"/>
    </location>
</feature>
<feature type="region of interest" description="Disordered" evidence="3">
    <location>
        <begin position="1267"/>
        <end position="1478"/>
    </location>
</feature>
<feature type="region of interest" description="Tudor-like" evidence="1">
    <location>
        <begin position="1481"/>
        <end position="1600"/>
    </location>
</feature>
<feature type="region of interest" description="Interaction with dimethylated histone H4" evidence="1">
    <location>
        <begin position="1492"/>
        <end position="1520"/>
    </location>
</feature>
<feature type="region of interest" description="Disordered" evidence="3">
    <location>
        <begin position="1624"/>
        <end position="1715"/>
    </location>
</feature>
<feature type="short sequence motif" description="GAR" evidence="1">
    <location>
        <begin position="1393"/>
        <end position="1400"/>
    </location>
</feature>
<feature type="short sequence motif" description="UDR" evidence="1">
    <location>
        <begin position="1601"/>
        <end position="1628"/>
    </location>
</feature>
<feature type="compositionally biased region" description="Polar residues" evidence="3">
    <location>
        <begin position="8"/>
        <end position="22"/>
    </location>
</feature>
<feature type="compositionally biased region" description="Polar residues" evidence="3">
    <location>
        <begin position="69"/>
        <end position="85"/>
    </location>
</feature>
<feature type="compositionally biased region" description="Basic and acidic residues" evidence="3">
    <location>
        <begin position="86"/>
        <end position="95"/>
    </location>
</feature>
<feature type="compositionally biased region" description="Polar residues" evidence="3">
    <location>
        <begin position="101"/>
        <end position="110"/>
    </location>
</feature>
<feature type="compositionally biased region" description="Acidic residues" evidence="3">
    <location>
        <begin position="135"/>
        <end position="148"/>
    </location>
</feature>
<feature type="compositionally biased region" description="Low complexity" evidence="3">
    <location>
        <begin position="158"/>
        <end position="168"/>
    </location>
</feature>
<feature type="compositionally biased region" description="Basic and acidic residues" evidence="3">
    <location>
        <begin position="277"/>
        <end position="288"/>
    </location>
</feature>
<feature type="compositionally biased region" description="Polar residues" evidence="3">
    <location>
        <begin position="294"/>
        <end position="324"/>
    </location>
</feature>
<feature type="compositionally biased region" description="Basic and acidic residues" evidence="3">
    <location>
        <begin position="407"/>
        <end position="419"/>
    </location>
</feature>
<feature type="compositionally biased region" description="Polar residues" evidence="3">
    <location>
        <begin position="426"/>
        <end position="442"/>
    </location>
</feature>
<feature type="compositionally biased region" description="Polar residues" evidence="3">
    <location>
        <begin position="481"/>
        <end position="490"/>
    </location>
</feature>
<feature type="compositionally biased region" description="Basic and acidic residues" evidence="3">
    <location>
        <begin position="491"/>
        <end position="501"/>
    </location>
</feature>
<feature type="compositionally biased region" description="Polar residues" evidence="3">
    <location>
        <begin position="517"/>
        <end position="528"/>
    </location>
</feature>
<feature type="compositionally biased region" description="Polar residues" evidence="3">
    <location>
        <begin position="566"/>
        <end position="582"/>
    </location>
</feature>
<feature type="compositionally biased region" description="Basic and acidic residues" evidence="3">
    <location>
        <begin position="583"/>
        <end position="599"/>
    </location>
</feature>
<feature type="compositionally biased region" description="Polar residues" evidence="3">
    <location>
        <begin position="614"/>
        <end position="634"/>
    </location>
</feature>
<feature type="compositionally biased region" description="Basic and acidic residues" evidence="3">
    <location>
        <begin position="640"/>
        <end position="649"/>
    </location>
</feature>
<feature type="compositionally biased region" description="Basic and acidic residues" evidence="3">
    <location>
        <begin position="666"/>
        <end position="675"/>
    </location>
</feature>
<feature type="compositionally biased region" description="Basic and acidic residues" evidence="3">
    <location>
        <begin position="790"/>
        <end position="818"/>
    </location>
</feature>
<feature type="compositionally biased region" description="Basic and acidic residues" evidence="3">
    <location>
        <begin position="830"/>
        <end position="839"/>
    </location>
</feature>
<feature type="compositionally biased region" description="Polar residues" evidence="3">
    <location>
        <begin position="935"/>
        <end position="949"/>
    </location>
</feature>
<feature type="compositionally biased region" description="Basic and acidic residues" evidence="3">
    <location>
        <begin position="961"/>
        <end position="975"/>
    </location>
</feature>
<feature type="compositionally biased region" description="Basic and acidic residues" evidence="3">
    <location>
        <begin position="1060"/>
        <end position="1074"/>
    </location>
</feature>
<feature type="compositionally biased region" description="Low complexity" evidence="3">
    <location>
        <begin position="1099"/>
        <end position="1112"/>
    </location>
</feature>
<feature type="compositionally biased region" description="Polar residues" evidence="3">
    <location>
        <begin position="1178"/>
        <end position="1197"/>
    </location>
</feature>
<feature type="compositionally biased region" description="Acidic residues" evidence="3">
    <location>
        <begin position="1269"/>
        <end position="1282"/>
    </location>
</feature>
<feature type="compositionally biased region" description="Low complexity" evidence="3">
    <location>
        <begin position="1295"/>
        <end position="1326"/>
    </location>
</feature>
<feature type="compositionally biased region" description="Low complexity" evidence="3">
    <location>
        <begin position="1469"/>
        <end position="1478"/>
    </location>
</feature>
<feature type="compositionally biased region" description="Low complexity" evidence="3">
    <location>
        <begin position="1631"/>
        <end position="1648"/>
    </location>
</feature>
<feature type="modified residue" description="Phosphoserine" evidence="1">
    <location>
        <position position="30"/>
    </location>
</feature>
<feature type="modified residue" description="Phosphoserine" evidence="1">
    <location>
        <position position="68"/>
    </location>
</feature>
<feature type="modified residue" description="Phosphoserine" evidence="22">
    <location>
        <position position="73"/>
    </location>
</feature>
<feature type="modified residue" description="Phosphoserine" evidence="1">
    <location>
        <position position="109"/>
    </location>
</feature>
<feature type="modified residue" description="Phosphoserine" evidence="1">
    <location>
        <position position="169"/>
    </location>
</feature>
<feature type="modified residue" description="Phosphoserine" evidence="1">
    <location>
        <position position="179"/>
    </location>
</feature>
<feature type="modified residue" description="Phosphoserine" evidence="1">
    <location>
        <position position="181"/>
    </location>
</feature>
<feature type="modified residue" description="Phosphoserine" evidence="22">
    <location>
        <position position="267"/>
    </location>
</feature>
<feature type="modified residue" description="Phosphoserine" evidence="22">
    <location>
        <position position="268"/>
    </location>
</feature>
<feature type="modified residue" description="Phosphoserine" evidence="1">
    <location>
        <position position="297"/>
    </location>
</feature>
<feature type="modified residue" description="Phosphothreonine" evidence="1">
    <location>
        <position position="305"/>
    </location>
</feature>
<feature type="modified residue" description="Phosphoserine" evidence="1">
    <location>
        <position position="368"/>
    </location>
</feature>
<feature type="modified residue" description="Phosphoserine" evidence="22">
    <location>
        <position position="382"/>
    </location>
</feature>
<feature type="modified residue" description="Phosphoserine" evidence="1">
    <location>
        <position position="397"/>
    </location>
</feature>
<feature type="modified residue" description="Phosphoserine" evidence="22">
    <location>
        <position position="429"/>
    </location>
</feature>
<feature type="modified residue" description="Phosphoserine" evidence="1">
    <location>
        <position position="452"/>
    </location>
</feature>
<feature type="modified residue" description="Phosphoserine" evidence="22">
    <location>
        <position position="464"/>
    </location>
</feature>
<feature type="modified residue" description="Phosphoserine" evidence="1">
    <location>
        <position position="507"/>
    </location>
</feature>
<feature type="modified residue" description="Phosphoserine" evidence="1">
    <location>
        <position position="518"/>
    </location>
</feature>
<feature type="modified residue" description="Phosphoserine" evidence="1">
    <location>
        <position position="523"/>
    </location>
</feature>
<feature type="modified residue" description="Phosphoserine" evidence="1">
    <location>
        <position position="525"/>
    </location>
</feature>
<feature type="modified residue" description="Phosphothreonine" evidence="1">
    <location>
        <position position="543"/>
    </location>
</feature>
<feature type="modified residue" description="Phosphothreonine" evidence="1">
    <location>
        <position position="548"/>
    </location>
</feature>
<feature type="modified residue" description="Phosphoserine" evidence="21 22">
    <location>
        <position position="552"/>
    </location>
</feature>
<feature type="modified residue" description="Phosphoserine" evidence="1">
    <location>
        <position position="579"/>
    </location>
</feature>
<feature type="modified residue" description="Phosphoserine" evidence="1">
    <location>
        <position position="622"/>
    </location>
</feature>
<feature type="modified residue" description="Phosphoserine" evidence="22">
    <location>
        <position position="627"/>
    </location>
</feature>
<feature type="modified residue" description="Phosphoserine" evidence="22">
    <location>
        <position position="631"/>
    </location>
</feature>
<feature type="modified residue" description="Phosphoserine" evidence="22">
    <location>
        <position position="632"/>
    </location>
</feature>
<feature type="modified residue" description="Phosphothreonine" evidence="1">
    <location>
        <position position="662"/>
    </location>
</feature>
<feature type="modified residue" description="Phosphoserine" evidence="1">
    <location>
        <position position="684"/>
    </location>
</feature>
<feature type="modified residue" description="Phosphoserine" evidence="22">
    <location>
        <position position="716"/>
    </location>
</feature>
<feature type="modified residue" description="Phosphoserine" evidence="22">
    <location>
        <position position="719"/>
    </location>
</feature>
<feature type="modified residue" description="Phosphoserine" evidence="1">
    <location>
        <position position="763"/>
    </location>
</feature>
<feature type="modified residue" description="Phosphoserine" evidence="22">
    <location>
        <position position="822"/>
    </location>
</feature>
<feature type="modified residue" description="Phosphothreonine" evidence="1">
    <location>
        <position position="912"/>
    </location>
</feature>
<feature type="modified residue" description="Phosphoserine" evidence="1">
    <location>
        <position position="965"/>
    </location>
</feature>
<feature type="modified residue" description="Phosphoserine" evidence="1">
    <location>
        <position position="1018"/>
    </location>
</feature>
<feature type="modified residue" description="Phosphoserine" evidence="1">
    <location>
        <position position="1075"/>
    </location>
</feature>
<feature type="modified residue" description="Phosphoserine" evidence="22">
    <location>
        <position position="1096"/>
    </location>
</feature>
<feature type="modified residue" description="Phosphoserine" evidence="20 22">
    <location>
        <position position="1115"/>
    </location>
</feature>
<feature type="modified residue" description="Phosphothreonine" evidence="1">
    <location>
        <position position="1211"/>
    </location>
</feature>
<feature type="modified residue" description="Phosphoserine" evidence="1">
    <location>
        <position position="1213"/>
    </location>
</feature>
<feature type="modified residue" description="Phosphoserine" evidence="1">
    <location>
        <position position="1216"/>
    </location>
</feature>
<feature type="modified residue" description="Phosphoserine" evidence="1">
    <location>
        <position position="1314"/>
    </location>
</feature>
<feature type="modified residue" description="Omega-N-methylarginine" evidence="23">
    <location>
        <position position="1329"/>
    </location>
</feature>
<feature type="modified residue" description="Phosphoserine" evidence="1">
    <location>
        <position position="1339"/>
    </location>
</feature>
<feature type="modified residue" description="Omega-N-methylarginine" evidence="23">
    <location>
        <position position="1352"/>
    </location>
</feature>
<feature type="modified residue" description="Phosphoserine" evidence="1">
    <location>
        <position position="1359"/>
    </location>
</feature>
<feature type="modified residue" description="Phosphoserine" evidence="1">
    <location>
        <position position="1365"/>
    </location>
</feature>
<feature type="modified residue" description="Phosphoserine" evidence="22">
    <location>
        <position position="1423"/>
    </location>
</feature>
<feature type="modified residue" description="Phosphoserine" evidence="22">
    <location>
        <position position="1427"/>
    </location>
</feature>
<feature type="modified residue" description="Phosphoserine" evidence="1">
    <location>
        <position position="1457"/>
    </location>
</feature>
<feature type="modified residue" description="Phosphoserine" evidence="22">
    <location>
        <position position="1459"/>
    </location>
</feature>
<feature type="modified residue" description="Phosphoserine" evidence="22">
    <location>
        <position position="1470"/>
    </location>
</feature>
<feature type="modified residue" description="Phosphoserine" evidence="1">
    <location>
        <position position="1471"/>
    </location>
</feature>
<feature type="modified residue" description="Phosphothreonine" evidence="1">
    <location>
        <position position="1606"/>
    </location>
</feature>
<feature type="modified residue" description="Phosphoserine" evidence="1">
    <location>
        <position position="1615"/>
    </location>
</feature>
<feature type="modified residue" description="Phosphoserine" evidence="22">
    <location>
        <position position="1628"/>
    </location>
</feature>
<feature type="modified residue" description="Phosphoserine" evidence="1">
    <location>
        <position position="1632"/>
    </location>
</feature>
<feature type="modified residue" description="Phosphothreonine" evidence="1">
    <location>
        <position position="1635"/>
    </location>
</feature>
<feature type="modified residue" description="Phosphothreonine" evidence="1">
    <location>
        <position position="1645"/>
    </location>
</feature>
<feature type="modified residue" description="Phosphoserine" evidence="1">
    <location>
        <position position="1653"/>
    </location>
</feature>
<feature type="modified residue" description="Phosphoserine" evidence="1">
    <location>
        <position position="1670"/>
    </location>
</feature>
<feature type="modified residue" description="Phosphoserine" evidence="1">
    <location>
        <position position="1675"/>
    </location>
</feature>
<feature type="modified residue" description="Phosphoserine" evidence="1">
    <location>
        <position position="1698"/>
    </location>
</feature>
<feature type="modified residue" description="Phosphoserine" evidence="1">
    <location>
        <position position="1756"/>
    </location>
</feature>
<feature type="cross-link" description="Glycyl lysine isopeptide (Lys-Gly) (interchain with G-Cter in SUMO1); alternate" evidence="1">
    <location>
        <position position="220"/>
    </location>
</feature>
<feature type="cross-link" description="Glycyl lysine isopeptide (Lys-Gly) (interchain with G-Cter in SUMO2); alternate" evidence="1">
    <location>
        <position position="220"/>
    </location>
</feature>
<feature type="cross-link" description="Glycyl lysine isopeptide (Lys-Gly) (interchain with G-Cter in SUMO2)" evidence="1">
    <location>
        <position position="920"/>
    </location>
</feature>
<feature type="cross-link" description="Glycyl lysine isopeptide (Lys-Gly) (interchain with G-Cter in SUMO2)" evidence="1">
    <location>
        <position position="974"/>
    </location>
</feature>
<feature type="cross-link" description="Glycyl lysine isopeptide (Lys-Gly) (interchain with G-Cter in SUMO2)" evidence="1">
    <location>
        <position position="1362"/>
    </location>
</feature>
<feature type="cross-link" description="Glycyl lysine isopeptide (Lys-Gly) (interchain with G-Cter in SUMO1); alternate" evidence="1">
    <location>
        <position position="1431"/>
    </location>
</feature>
<feature type="cross-link" description="Glycyl lysine isopeptide (Lys-Gly) (interchain with G-Cter in SUMO2); alternate" evidence="1">
    <location>
        <position position="1431"/>
    </location>
</feature>
<feature type="cross-link" description="Glycyl lysine isopeptide (Lys-Gly) (interchain with G-Cter in SUMO1); alternate" evidence="1">
    <location>
        <position position="1560"/>
    </location>
</feature>
<feature type="cross-link" description="Glycyl lysine isopeptide (Lys-Gly) (interchain with G-Cter in SUMO2); alternate" evidence="1">
    <location>
        <position position="1560"/>
    </location>
</feature>
<feature type="cross-link" description="Glycyl lysine isopeptide (Lys-Gly) (interchain with G-Cter in ubiquitin)" evidence="1">
    <location>
        <position position="1682"/>
    </location>
</feature>
<feature type="splice variant" id="VSP_058926" description="In isoform 3.">
    <location>
        <begin position="1"/>
        <end position="949"/>
    </location>
</feature>
<feature type="splice variant" id="VSP_058927" description="In isoform 2 and isoform 3.">
    <location>
        <begin position="1101"/>
        <end position="1106"/>
    </location>
</feature>
<feature type="sequence conflict" description="In Ref. 3; CAC94013." evidence="18" ref="3">
    <location>
        <position position="145"/>
    </location>
</feature>
<feature type="sequence conflict" description="In Ref. 3; CAC94013." evidence="18" ref="3">
    <original>V</original>
    <variation>A</variation>
    <location>
        <position position="401"/>
    </location>
</feature>
<feature type="sequence conflict" description="In Ref. 3; CAC94013." evidence="18" ref="3">
    <original>A</original>
    <variation>T</variation>
    <location>
        <position position="427"/>
    </location>
</feature>
<feature type="sequence conflict" description="In Ref. 3; CAC94013." evidence="18" ref="3">
    <original>P</original>
    <variation>A</variation>
    <location>
        <position position="675"/>
    </location>
</feature>
<feature type="sequence conflict" description="In Ref. 2; AAH79906." evidence="18" ref="2">
    <original>P</original>
    <variation>L</variation>
    <location>
        <position position="1070"/>
    </location>
</feature>
<feature type="sequence conflict" description="In Ref. 2; AAH35206." evidence="18" ref="2">
    <original>K</original>
    <variation>N</variation>
    <location>
        <position position="1071"/>
    </location>
</feature>
<feature type="sequence conflict" description="In Ref. 4; AAC52876." evidence="18" ref="4">
    <original>EQ</original>
    <variation>DE</variation>
    <location>
        <begin position="1183"/>
        <end position="1184"/>
    </location>
</feature>
<feature type="sequence conflict" description="In Ref. 3; CAC94013." evidence="18" ref="3">
    <original>G</original>
    <variation>R</variation>
    <location>
        <position position="1187"/>
    </location>
</feature>
<feature type="sequence conflict" description="In Ref. 4; AAC52876." evidence="18" ref="4">
    <original>A</original>
    <variation>T</variation>
    <location>
        <position position="1206"/>
    </location>
</feature>
<feature type="sequence conflict" description="In Ref. 4; AAC52876." evidence="18" ref="4">
    <original>E</original>
    <variation>G</variation>
    <location>
        <position position="1271"/>
    </location>
</feature>
<feature type="sequence conflict" description="In Ref. 2; AAH79906." evidence="18" ref="2">
    <location>
        <begin position="1359"/>
        <end position="1408"/>
    </location>
</feature>
<feature type="sequence conflict" description="In Ref. 2; AAH79906." evidence="18" ref="2">
    <original>Q</original>
    <variation>H</variation>
    <location>
        <position position="1771"/>
    </location>
</feature>
<feature type="strand" evidence="24">
    <location>
        <begin position="1487"/>
        <end position="1490"/>
    </location>
</feature>
<feature type="strand" evidence="24">
    <location>
        <begin position="1495"/>
        <end position="1505"/>
    </location>
</feature>
<feature type="turn" evidence="24">
    <location>
        <begin position="1508"/>
        <end position="1510"/>
    </location>
</feature>
<feature type="strand" evidence="24">
    <location>
        <begin position="1511"/>
        <end position="1515"/>
    </location>
</feature>
<feature type="strand" evidence="24">
    <location>
        <begin position="1521"/>
        <end position="1525"/>
    </location>
</feature>
<feature type="turn" evidence="24">
    <location>
        <begin position="1526"/>
        <end position="1528"/>
    </location>
</feature>
<feature type="strand" evidence="24">
    <location>
        <begin position="1529"/>
        <end position="1532"/>
    </location>
</feature>
<feature type="strand" evidence="24">
    <location>
        <begin position="1537"/>
        <end position="1545"/>
    </location>
</feature>
<feature type="turn" evidence="24">
    <location>
        <begin position="1547"/>
        <end position="1549"/>
    </location>
</feature>
<feature type="strand" evidence="24">
    <location>
        <begin position="1551"/>
        <end position="1561"/>
    </location>
</feature>
<feature type="strand" evidence="24">
    <location>
        <begin position="1564"/>
        <end position="1571"/>
    </location>
</feature>
<feature type="strand" evidence="24">
    <location>
        <begin position="1574"/>
        <end position="1578"/>
    </location>
</feature>
<feature type="helix" evidence="24">
    <location>
        <begin position="1580"/>
        <end position="1582"/>
    </location>
</feature>
<feature type="strand" evidence="24">
    <location>
        <begin position="1583"/>
        <end position="1586"/>
    </location>
</feature>
<feature type="helix" evidence="24">
    <location>
        <begin position="1587"/>
        <end position="1591"/>
    </location>
</feature>
<feature type="turn" evidence="24">
    <location>
        <begin position="1592"/>
        <end position="1596"/>
    </location>
</feature>
<feature type="strand" evidence="24">
    <location>
        <begin position="1597"/>
        <end position="1599"/>
    </location>
</feature>
<evidence type="ECO:0000250" key="1">
    <source>
        <dbReference type="UniProtKB" id="Q12888"/>
    </source>
</evidence>
<evidence type="ECO:0000255" key="2">
    <source>
        <dbReference type="PROSITE-ProRule" id="PRU00033"/>
    </source>
</evidence>
<evidence type="ECO:0000256" key="3">
    <source>
        <dbReference type="SAM" id="MobiDB-lite"/>
    </source>
</evidence>
<evidence type="ECO:0000269" key="4">
    <source>
    </source>
</evidence>
<evidence type="ECO:0000269" key="5">
    <source>
    </source>
</evidence>
<evidence type="ECO:0000269" key="6">
    <source>
    </source>
</evidence>
<evidence type="ECO:0000269" key="7">
    <source>
    </source>
</evidence>
<evidence type="ECO:0000269" key="8">
    <source>
    </source>
</evidence>
<evidence type="ECO:0000269" key="9">
    <source>
    </source>
</evidence>
<evidence type="ECO:0000269" key="10">
    <source>
    </source>
</evidence>
<evidence type="ECO:0000269" key="11">
    <source>
    </source>
</evidence>
<evidence type="ECO:0000269" key="12">
    <source>
    </source>
</evidence>
<evidence type="ECO:0000269" key="13">
    <source>
    </source>
</evidence>
<evidence type="ECO:0000269" key="14">
    <source>
    </source>
</evidence>
<evidence type="ECO:0000269" key="15">
    <source>
    </source>
</evidence>
<evidence type="ECO:0000269" key="16">
    <source>
    </source>
</evidence>
<evidence type="ECO:0000303" key="17">
    <source>
    </source>
</evidence>
<evidence type="ECO:0000305" key="18"/>
<evidence type="ECO:0000312" key="19">
    <source>
        <dbReference type="MGI" id="MGI:1351320"/>
    </source>
</evidence>
<evidence type="ECO:0007744" key="20">
    <source>
    </source>
</evidence>
<evidence type="ECO:0007744" key="21">
    <source>
    </source>
</evidence>
<evidence type="ECO:0007744" key="22">
    <source>
    </source>
</evidence>
<evidence type="ECO:0007744" key="23">
    <source>
    </source>
</evidence>
<evidence type="ECO:0007829" key="24">
    <source>
        <dbReference type="PDB" id="1SSF"/>
    </source>
</evidence>
<keyword id="KW-0002">3D-structure</keyword>
<keyword id="KW-0010">Activator</keyword>
<keyword id="KW-0025">Alternative splicing</keyword>
<keyword id="KW-0137">Centromere</keyword>
<keyword id="KW-0158">Chromosome</keyword>
<keyword id="KW-0227">DNA damage</keyword>
<keyword id="KW-0234">DNA repair</keyword>
<keyword id="KW-0238">DNA-binding</keyword>
<keyword id="KW-1017">Isopeptide bond</keyword>
<keyword id="KW-0995">Kinetochore</keyword>
<keyword id="KW-0488">Methylation</keyword>
<keyword id="KW-0539">Nucleus</keyword>
<keyword id="KW-0597">Phosphoprotein</keyword>
<keyword id="KW-1185">Reference proteome</keyword>
<keyword id="KW-0677">Repeat</keyword>
<keyword id="KW-0804">Transcription</keyword>
<keyword id="KW-0805">Transcription regulation</keyword>
<keyword id="KW-0832">Ubl conjugation</keyword>
<proteinExistence type="evidence at protein level"/>